<proteinExistence type="evidence at protein level"/>
<evidence type="ECO:0000250" key="1">
    <source>
        <dbReference type="UniProtKB" id="P00403"/>
    </source>
</evidence>
<evidence type="ECO:0000250" key="2">
    <source>
        <dbReference type="UniProtKB" id="P00406"/>
    </source>
</evidence>
<evidence type="ECO:0000250" key="3">
    <source>
        <dbReference type="UniProtKB" id="P00410"/>
    </source>
</evidence>
<evidence type="ECO:0000250" key="4">
    <source>
        <dbReference type="UniProtKB" id="P68530"/>
    </source>
</evidence>
<evidence type="ECO:0000269" key="5">
    <source>
    </source>
</evidence>
<evidence type="ECO:0000269" key="6">
    <source>
    </source>
</evidence>
<evidence type="ECO:0000305" key="7"/>
<evidence type="ECO:0000312" key="8">
    <source>
        <dbReference type="PDB" id="7O3E"/>
    </source>
</evidence>
<evidence type="ECO:0007744" key="9">
    <source>
        <dbReference type="PDB" id="7O37"/>
    </source>
</evidence>
<evidence type="ECO:0007744" key="10">
    <source>
        <dbReference type="PDB" id="7O3C"/>
    </source>
</evidence>
<evidence type="ECO:0007744" key="11">
    <source>
        <dbReference type="PDB" id="8PW5"/>
    </source>
</evidence>
<evidence type="ECO:0007829" key="12">
    <source>
        <dbReference type="PDB" id="7O37"/>
    </source>
</evidence>
<evidence type="ECO:0007829" key="13">
    <source>
        <dbReference type="PDB" id="7O3C"/>
    </source>
</evidence>
<gene>
    <name type="primary">Mtco2</name>
    <name type="synonym">COII</name>
    <name type="synonym">COX2</name>
    <name type="synonym">mt-Co2</name>
</gene>
<feature type="chain" id="PRO_0000183635" description="Cytochrome c oxidase subunit 2">
    <location>
        <begin position="1"/>
        <end position="227"/>
    </location>
</feature>
<feature type="topological domain" description="Mitochondrial intermembrane" evidence="5 9 10">
    <location>
        <begin position="1"/>
        <end position="22"/>
    </location>
</feature>
<feature type="transmembrane region" description="Helical; Name=I" evidence="5 9 10">
    <location>
        <begin position="23"/>
        <end position="44"/>
    </location>
</feature>
<feature type="topological domain" description="Mitochondrial matrix" evidence="5 9 10">
    <location>
        <begin position="45"/>
        <end position="60"/>
    </location>
</feature>
<feature type="transmembrane region" description="Helical; Name=II" evidence="5 9 10">
    <location>
        <begin position="61"/>
        <end position="81"/>
    </location>
</feature>
<feature type="topological domain" description="Mitochondrial intermembrane" evidence="5 9 10">
    <location>
        <begin position="82"/>
        <end position="227"/>
    </location>
</feature>
<feature type="binding site" evidence="5 9 10">
    <location>
        <position position="161"/>
    </location>
    <ligand>
        <name>Cu cation</name>
        <dbReference type="ChEBI" id="CHEBI:23378"/>
        <label>A1</label>
    </ligand>
</feature>
<feature type="binding site" evidence="5 9 10">
    <location>
        <position position="196"/>
    </location>
    <ligand>
        <name>Cu cation</name>
        <dbReference type="ChEBI" id="CHEBI:23378"/>
        <label>A1</label>
    </ligand>
</feature>
<feature type="binding site" evidence="5 9 10">
    <location>
        <position position="196"/>
    </location>
    <ligand>
        <name>Cu cation</name>
        <dbReference type="ChEBI" id="CHEBI:23378"/>
        <label>A2</label>
    </ligand>
</feature>
<feature type="binding site" evidence="5 9 10">
    <location>
        <position position="198"/>
    </location>
    <ligand>
        <name>Cu cation</name>
        <dbReference type="ChEBI" id="CHEBI:23378"/>
        <label>A2</label>
    </ligand>
</feature>
<feature type="binding site" evidence="5 9 10">
    <location>
        <position position="198"/>
    </location>
    <ligand>
        <name>Mg(2+)</name>
        <dbReference type="ChEBI" id="CHEBI:18420"/>
        <note>ligand shared with MT-CO1</note>
    </ligand>
</feature>
<feature type="binding site" evidence="5 9 10">
    <location>
        <position position="200"/>
    </location>
    <ligand>
        <name>Cu cation</name>
        <dbReference type="ChEBI" id="CHEBI:23378"/>
        <label>A1</label>
    </ligand>
</feature>
<feature type="binding site" evidence="5 9 10">
    <location>
        <position position="200"/>
    </location>
    <ligand>
        <name>Cu cation</name>
        <dbReference type="ChEBI" id="CHEBI:23378"/>
        <label>A2</label>
    </ligand>
</feature>
<feature type="binding site" evidence="5 9 10">
    <location>
        <position position="204"/>
    </location>
    <ligand>
        <name>Cu cation</name>
        <dbReference type="ChEBI" id="CHEBI:23378"/>
        <label>A2</label>
    </ligand>
</feature>
<feature type="binding site" evidence="5 9 10">
    <location>
        <position position="207"/>
    </location>
    <ligand>
        <name>Cu cation</name>
        <dbReference type="ChEBI" id="CHEBI:23378"/>
        <label>A1</label>
    </ligand>
</feature>
<feature type="modified residue" description="Phosphotyrosine" evidence="2">
    <location>
        <position position="218"/>
    </location>
</feature>
<feature type="helix" evidence="12">
    <location>
        <begin position="15"/>
        <end position="46"/>
    </location>
</feature>
<feature type="strand" evidence="12">
    <location>
        <begin position="58"/>
        <end position="61"/>
    </location>
</feature>
<feature type="helix" evidence="12">
    <location>
        <begin position="62"/>
        <end position="84"/>
    </location>
</feature>
<feature type="strand" evidence="12">
    <location>
        <begin position="87"/>
        <end position="89"/>
    </location>
</feature>
<feature type="strand" evidence="12">
    <location>
        <begin position="94"/>
        <end position="102"/>
    </location>
</feature>
<feature type="strand" evidence="12">
    <location>
        <begin position="105"/>
        <end position="110"/>
    </location>
</feature>
<feature type="strand" evidence="12">
    <location>
        <begin position="112"/>
        <end position="114"/>
    </location>
</feature>
<feature type="strand" evidence="12">
    <location>
        <begin position="116"/>
        <end position="120"/>
    </location>
</feature>
<feature type="helix" evidence="12">
    <location>
        <begin position="125"/>
        <end position="127"/>
    </location>
</feature>
<feature type="turn" evidence="12">
    <location>
        <begin position="134"/>
        <end position="136"/>
    </location>
</feature>
<feature type="strand" evidence="12">
    <location>
        <begin position="138"/>
        <end position="140"/>
    </location>
</feature>
<feature type="strand" evidence="12">
    <location>
        <begin position="142"/>
        <end position="145"/>
    </location>
</feature>
<feature type="strand" evidence="13">
    <location>
        <begin position="146"/>
        <end position="148"/>
    </location>
</feature>
<feature type="strand" evidence="12">
    <location>
        <begin position="150"/>
        <end position="155"/>
    </location>
</feature>
<feature type="strand" evidence="12">
    <location>
        <begin position="157"/>
        <end position="159"/>
    </location>
</feature>
<feature type="strand" evidence="12">
    <location>
        <begin position="161"/>
        <end position="165"/>
    </location>
</feature>
<feature type="turn" evidence="12">
    <location>
        <begin position="166"/>
        <end position="169"/>
    </location>
</feature>
<feature type="strand" evidence="12">
    <location>
        <begin position="170"/>
        <end position="174"/>
    </location>
</feature>
<feature type="strand" evidence="12">
    <location>
        <begin position="180"/>
        <end position="184"/>
    </location>
</feature>
<feature type="strand" evidence="12">
    <location>
        <begin position="190"/>
        <end position="195"/>
    </location>
</feature>
<feature type="turn" evidence="12">
    <location>
        <begin position="202"/>
        <end position="205"/>
    </location>
</feature>
<feature type="strand" evidence="12">
    <location>
        <begin position="208"/>
        <end position="214"/>
    </location>
</feature>
<feature type="helix" evidence="12">
    <location>
        <begin position="216"/>
        <end position="226"/>
    </location>
</feature>
<organism>
    <name type="scientific">Mus musculus</name>
    <name type="common">Mouse</name>
    <dbReference type="NCBI Taxonomy" id="10090"/>
    <lineage>
        <taxon>Eukaryota</taxon>
        <taxon>Metazoa</taxon>
        <taxon>Chordata</taxon>
        <taxon>Craniata</taxon>
        <taxon>Vertebrata</taxon>
        <taxon>Euteleostomi</taxon>
        <taxon>Mammalia</taxon>
        <taxon>Eutheria</taxon>
        <taxon>Euarchontoglires</taxon>
        <taxon>Glires</taxon>
        <taxon>Rodentia</taxon>
        <taxon>Myomorpha</taxon>
        <taxon>Muroidea</taxon>
        <taxon>Muridae</taxon>
        <taxon>Murinae</taxon>
        <taxon>Mus</taxon>
        <taxon>Mus</taxon>
    </lineage>
</organism>
<accession>P00405</accession>
<accession>Q85K21</accession>
<sequence length="227" mass="25976">MAYPFQLGLQDATSPIMEELMNFHDHTLMIVFLISSLVLYIISLMLTTKLTHTSTMDAQEVETIWTILPAVILIMIALPSLRILYMMDEINNPVLTVKTMGHQWYWSYEYTDYEDLCFDSYMIPTNDLKPGELRLLEVDNRVVLPMELPIRMLISSEDVLHSWAVPSLGLKTDAIPGRLNQATVTSNRPGLFYGQCSEICGSNHSFMPIVLEMVPLKYFENWSASMI</sequence>
<comment type="function">
    <text evidence="5 6">Component of the cytochrome c oxidase, the last enzyme in the mitochondrial electron transport chain which drives oxidative phosphorylation. The respiratory chain contains 3 multisubunit complexes succinate dehydrogenase (complex II, CII), ubiquinol-cytochrome c oxidoreductase (cytochrome b-c1 complex, complex III, CIII) and cytochrome c oxidase (complex IV, CIV), that cooperate to transfer electrons derived from NADH and succinate to molecular oxygen, creating an electrochemical gradient over the inner membrane that drives transmembrane transport and the ATP synthase. Cytochrome c oxidase is the component of the respiratory chain that catalyzes the reduction of oxygen to water. Electrons originating from reduced cytochrome c in the intermembrane space (IMS) are transferred via the dinuclear copper A center (CU(A)) of subunit 2 and heme A of subunit 1 to the active site in subunit 1, a binuclear center (BNC) formed by heme A3 and copper B (CU(B)). The BNC reduces molecular oxygen to 2 water molecules using 4 electrons from cytochrome c in the IMS and 4 protons from the mitochondrial matrix.</text>
</comment>
<comment type="catalytic activity">
    <reaction evidence="3">
        <text>4 Fe(II)-[cytochrome c] + O2 + 8 H(+)(in) = 4 Fe(III)-[cytochrome c] + 2 H2O + 4 H(+)(out)</text>
        <dbReference type="Rhea" id="RHEA:11436"/>
        <dbReference type="Rhea" id="RHEA-COMP:10350"/>
        <dbReference type="Rhea" id="RHEA-COMP:14399"/>
        <dbReference type="ChEBI" id="CHEBI:15377"/>
        <dbReference type="ChEBI" id="CHEBI:15378"/>
        <dbReference type="ChEBI" id="CHEBI:15379"/>
        <dbReference type="ChEBI" id="CHEBI:29033"/>
        <dbReference type="ChEBI" id="CHEBI:29034"/>
        <dbReference type="EC" id="7.1.1.9"/>
    </reaction>
    <physiologicalReaction direction="left-to-right" evidence="3">
        <dbReference type="Rhea" id="RHEA:11437"/>
    </physiologicalReaction>
</comment>
<comment type="cofactor">
    <cofactor evidence="5">
        <name>Cu cation</name>
        <dbReference type="ChEBI" id="CHEBI:23378"/>
    </cofactor>
    <text evidence="5">Binds a dinuclear copper A center per subunit.</text>
</comment>
<comment type="subunit">
    <text evidence="1 4 5 6">Component of the cytochrome c oxidase (complex IV, CIV), a multisubunit enzyme composed of 14 subunits (PubMed:34616041, PubMed:38575788). The complex is composed of a catalytic core of 3 subunits MT-CO1, MT-CO2 and MT-CO3, encoded in the mitochondrial DNA, and 11 supernumerary subunits COX4I, COX5A, COX5B, COX6A, COX6B, COX6C, COX7A, COX7B, COX7C, COX8 and NDUFA4, which are encoded in the nuclear genome (PubMed:34616041, PubMed:38575788). The complex exists as a monomer or a dimer and forms supercomplexes (SCs) in the inner mitochondrial membrane with NADH-ubiquinone oxidoreductase (complex I, CI) and ubiquinol-cytochrome c oxidoreductase (cytochrome b-c1 complex, complex III, CIII), resulting in different assemblies (supercomplex SCI(1)III(2)IV(1) and megacomplex MCI(2)III(2)IV(2)) (PubMed:34616041, PubMed:38575788). Found in a complex with TMEM177, COA6, COX18, COX20, SCO1 and SCO2. Interacts with TMEM177 in a COX20-dependent manner. Interacts with COX20. Interacts with COX16 (By similarity).</text>
</comment>
<comment type="subcellular location">
    <subcellularLocation>
        <location evidence="5 6">Mitochondrion inner membrane</location>
        <topology evidence="5 6">Multi-pass membrane protein</topology>
    </subcellularLocation>
</comment>
<comment type="similarity">
    <text evidence="7">Belongs to the cytochrome c oxidase subunit 2 family.</text>
</comment>
<reference key="1">
    <citation type="journal article" date="1981" name="Cell">
        <title>Sequence and gene organization of mouse mitochondrial DNA.</title>
        <authorList>
            <person name="Bibb M.J."/>
            <person name="van Etten R.A."/>
            <person name="Wright C.T."/>
            <person name="Walberg M.W."/>
            <person name="Clayton D.A."/>
        </authorList>
    </citation>
    <scope>NUCLEOTIDE SEQUENCE [GENOMIC DNA]</scope>
</reference>
<reference key="2">
    <citation type="journal article" date="2003" name="Nucleic Acids Res.">
        <title>Revisiting the mouse mitochondrial DNA sequence.</title>
        <authorList>
            <person name="Bayona-Bafaluy M.P."/>
            <person name="Acin-Perez R."/>
            <person name="Mullikin J.C."/>
            <person name="Park J.S."/>
            <person name="Moreno-Loshuertos R."/>
            <person name="Hu P."/>
            <person name="Perez-Martos A."/>
            <person name="Fernandez-Silva P."/>
            <person name="Bai Y."/>
            <person name="Enriquez J.A."/>
        </authorList>
    </citation>
    <scope>NUCLEOTIDE SEQUENCE [LARGE SCALE GENOMIC DNA]</scope>
    <source>
        <strain>C57BL/6J</strain>
    </source>
</reference>
<reference key="3">
    <citation type="journal article" date="1993" name="Mamm. Genome">
        <title>Sequence analysis of a deleted mitochondrial DNA molecule in heteroplasmic mice.</title>
        <authorList>
            <person name="Nelson I."/>
            <person name="Gerasimov S."/>
            <person name="Marsac C."/>
            <person name="Lestienne P."/>
            <person name="Boursot P."/>
        </authorList>
    </citation>
    <scope>NUCLEOTIDE SEQUENCE [GENOMIC DNA] OF 57-63</scope>
</reference>
<reference key="4">
    <citation type="submission" date="2007-04" db="UniProtKB">
        <authorList>
            <person name="Lubec G."/>
            <person name="Kang S.U."/>
        </authorList>
    </citation>
    <scope>PROTEIN SEQUENCE OF 83-98; 135-171 AND 218-227</scope>
    <scope>IDENTIFICATION BY MASS SPECTROMETRY</scope>
    <source>
        <strain>C57BL/6J</strain>
        <tissue>Brain</tissue>
    </source>
</reference>
<reference key="5">
    <citation type="journal article" date="2010" name="Cell">
        <title>A tissue-specific atlas of mouse protein phosphorylation and expression.</title>
        <authorList>
            <person name="Huttlin E.L."/>
            <person name="Jedrychowski M.P."/>
            <person name="Elias J.E."/>
            <person name="Goswami T."/>
            <person name="Rad R."/>
            <person name="Beausoleil S.A."/>
            <person name="Villen J."/>
            <person name="Haas W."/>
            <person name="Sowa M.E."/>
            <person name="Gygi S.P."/>
        </authorList>
    </citation>
    <scope>IDENTIFICATION BY MASS SPECTROMETRY [LARGE SCALE ANALYSIS]</scope>
    <source>
        <tissue>Brain</tissue>
        <tissue>Brown adipose tissue</tissue>
        <tissue>Heart</tissue>
        <tissue>Kidney</tissue>
        <tissue>Liver</tissue>
        <tissue>Lung</tissue>
        <tissue>Pancreas</tissue>
        <tissue>Spleen</tissue>
        <tissue>Testis</tissue>
    </source>
</reference>
<reference evidence="8 9 10" key="6">
    <citation type="journal article" date="2021" name="Nature">
        <title>Structure and assembly of the mammalian mitochondrial supercomplex CIII2CIV.</title>
        <authorList>
            <person name="Vercellino I."/>
            <person name="Sazanov L.A."/>
        </authorList>
    </citation>
    <scope>STRUCTURE BY ELECTRON MICROSCOPY (3.20 ANGSTROMS) IN COMPLEX WITH MITOCHONDRIAL RESPIRATORY SUPERCOMPLEX</scope>
    <scope>FUNCTION</scope>
    <scope>COFACTOR</scope>
    <scope>SUBCELLULAR LOCATION</scope>
    <scope>SUBUNIT</scope>
</reference>
<reference evidence="11" key="7">
    <citation type="journal article" date="2024" name="Nat. Struct. Mol. Biol.">
        <title>SCAF1 drives the compositional diversity of mammalian respirasomes.</title>
        <authorList>
            <person name="Vercellino I."/>
            <person name="Sazanov L.A."/>
        </authorList>
    </citation>
    <scope>STRUCTURE BY ELECTRON MICROSCOPY (3.60 ANGSTROMS) IN COMPLEX WITH MITOCHONDRIAL RESPIRATORY SUPERCOMPLEX</scope>
    <scope>FUNCTION</scope>
    <scope>SUBCELLULAR LOCATION</scope>
    <scope>SUBUNIT</scope>
</reference>
<dbReference type="EC" id="7.1.1.9"/>
<dbReference type="EMBL" id="J01420">
    <property type="protein sequence ID" value="AAB48647.1"/>
    <property type="molecule type" value="Genomic_DNA"/>
</dbReference>
<dbReference type="EMBL" id="V00711">
    <property type="protein sequence ID" value="CAA24083.1"/>
    <property type="molecule type" value="Genomic_DNA"/>
</dbReference>
<dbReference type="EMBL" id="AY172335">
    <property type="protein sequence ID" value="AAN85125.1"/>
    <property type="molecule type" value="Genomic_DNA"/>
</dbReference>
<dbReference type="EMBL" id="S68119">
    <property type="protein sequence ID" value="AAP15814.1"/>
    <property type="molecule type" value="Genomic_DNA"/>
</dbReference>
<dbReference type="PIR" id="A00474">
    <property type="entry name" value="OBMS2"/>
</dbReference>
<dbReference type="RefSeq" id="NP_904331.1">
    <property type="nucleotide sequence ID" value="NC_005089.1"/>
</dbReference>
<dbReference type="PDB" id="7O37">
    <property type="method" value="EM"/>
    <property type="resolution" value="3.20 A"/>
    <property type="chains" value="b=1-227"/>
</dbReference>
<dbReference type="PDB" id="7O3C">
    <property type="method" value="EM"/>
    <property type="resolution" value="3.30 A"/>
    <property type="chains" value="b=1-227"/>
</dbReference>
<dbReference type="PDB" id="7O3E">
    <property type="method" value="EM"/>
    <property type="resolution" value="3.60 A"/>
    <property type="chains" value="b=1-227"/>
</dbReference>
<dbReference type="PDB" id="8PW5">
    <property type="method" value="EM"/>
    <property type="resolution" value="3.60 A"/>
    <property type="chains" value="b/o=1-227"/>
</dbReference>
<dbReference type="PDB" id="8PW6">
    <property type="method" value="EM"/>
    <property type="resolution" value="3.30 A"/>
    <property type="chains" value="o=1-227"/>
</dbReference>
<dbReference type="PDB" id="8PW7">
    <property type="method" value="EM"/>
    <property type="resolution" value="3.50 A"/>
    <property type="chains" value="o=1-227"/>
</dbReference>
<dbReference type="PDBsum" id="7O37"/>
<dbReference type="PDBsum" id="7O3C"/>
<dbReference type="PDBsum" id="7O3E"/>
<dbReference type="PDBsum" id="8PW5"/>
<dbReference type="PDBsum" id="8PW6"/>
<dbReference type="PDBsum" id="8PW7"/>
<dbReference type="EMDB" id="EMD-12702"/>
<dbReference type="EMDB" id="EMD-12703"/>
<dbReference type="EMDB" id="EMD-12705"/>
<dbReference type="EMDB" id="EMD-17989"/>
<dbReference type="EMDB" id="EMD-17990"/>
<dbReference type="EMDB" id="EMD-17991"/>
<dbReference type="SMR" id="P00405"/>
<dbReference type="BioGRID" id="201542">
    <property type="interactions" value="17"/>
</dbReference>
<dbReference type="CORUM" id="P00405"/>
<dbReference type="FunCoup" id="P00405">
    <property type="interactions" value="394"/>
</dbReference>
<dbReference type="IntAct" id="P00405">
    <property type="interactions" value="14"/>
</dbReference>
<dbReference type="MINT" id="P00405"/>
<dbReference type="STRING" id="10090.ENSMUSP00000080994"/>
<dbReference type="GlyGen" id="P00405">
    <property type="glycosylation" value="1 site, 1 O-linked glycan (1 site)"/>
</dbReference>
<dbReference type="iPTMnet" id="P00405"/>
<dbReference type="MetOSite" id="P00405"/>
<dbReference type="PhosphoSitePlus" id="P00405"/>
<dbReference type="SwissPalm" id="P00405"/>
<dbReference type="jPOST" id="P00405"/>
<dbReference type="PaxDb" id="10090-ENSMUSP00000080994"/>
<dbReference type="PeptideAtlas" id="P00405"/>
<dbReference type="ProteomicsDB" id="284150"/>
<dbReference type="Pumba" id="P00405"/>
<dbReference type="Antibodypedia" id="4262">
    <property type="antibodies" value="233 antibodies from 33 providers"/>
</dbReference>
<dbReference type="Ensembl" id="ENSMUST00000082405.1">
    <property type="protein sequence ID" value="ENSMUSP00000080994.1"/>
    <property type="gene ID" value="ENSMUSG00000064354.1"/>
</dbReference>
<dbReference type="GeneID" id="17709"/>
<dbReference type="KEGG" id="mmu:17709"/>
<dbReference type="AGR" id="MGI:102503"/>
<dbReference type="CTD" id="4513"/>
<dbReference type="MGI" id="MGI:102503">
    <property type="gene designation" value="mt-Co2"/>
</dbReference>
<dbReference type="VEuPathDB" id="HostDB:ENSMUSG00000064354"/>
<dbReference type="eggNOG" id="KOG4767">
    <property type="taxonomic scope" value="Eukaryota"/>
</dbReference>
<dbReference type="GeneTree" id="ENSGT00390000017410"/>
<dbReference type="HOGENOM" id="CLU_036876_2_3_1"/>
<dbReference type="InParanoid" id="P00405"/>
<dbReference type="OMA" id="WSYEYTD"/>
<dbReference type="OrthoDB" id="539285at2759"/>
<dbReference type="PhylomeDB" id="P00405"/>
<dbReference type="TreeFam" id="TF344269"/>
<dbReference type="Reactome" id="R-MMU-5628897">
    <property type="pathway name" value="TP53 Regulates Metabolic Genes"/>
</dbReference>
<dbReference type="Reactome" id="R-MMU-611105">
    <property type="pathway name" value="Respiratory electron transport"/>
</dbReference>
<dbReference type="Reactome" id="R-MMU-9707564">
    <property type="pathway name" value="Cytoprotection by HMOX1"/>
</dbReference>
<dbReference type="Reactome" id="R-MMU-9864848">
    <property type="pathway name" value="Complex IV assembly"/>
</dbReference>
<dbReference type="CD-CODE" id="CE726F99">
    <property type="entry name" value="Postsynaptic density"/>
</dbReference>
<dbReference type="ChiTaRS" id="mt-Co2">
    <property type="organism name" value="mouse"/>
</dbReference>
<dbReference type="PRO" id="PR:P00405"/>
<dbReference type="Proteomes" id="UP000000589">
    <property type="component" value="Mitochondrion MT"/>
</dbReference>
<dbReference type="RNAct" id="P00405">
    <property type="molecule type" value="protein"/>
</dbReference>
<dbReference type="Bgee" id="ENSMUSG00000064354">
    <property type="expression patterns" value="Expressed in ventricular zone and 63 other cell types or tissues"/>
</dbReference>
<dbReference type="ExpressionAtlas" id="P00405">
    <property type="expression patterns" value="baseline and differential"/>
</dbReference>
<dbReference type="GO" id="GO:0005743">
    <property type="term" value="C:mitochondrial inner membrane"/>
    <property type="evidence" value="ECO:0000314"/>
    <property type="project" value="UniProtKB"/>
</dbReference>
<dbReference type="GO" id="GO:0005739">
    <property type="term" value="C:mitochondrion"/>
    <property type="evidence" value="ECO:0000314"/>
    <property type="project" value="MGI"/>
</dbReference>
<dbReference type="GO" id="GO:0045277">
    <property type="term" value="C:respiratory chain complex IV"/>
    <property type="evidence" value="ECO:0000314"/>
    <property type="project" value="UniProtKB"/>
</dbReference>
<dbReference type="GO" id="GO:0005507">
    <property type="term" value="F:copper ion binding"/>
    <property type="evidence" value="ECO:0007669"/>
    <property type="project" value="InterPro"/>
</dbReference>
<dbReference type="GO" id="GO:0004129">
    <property type="term" value="F:cytochrome-c oxidase activity"/>
    <property type="evidence" value="ECO:0007669"/>
    <property type="project" value="UniProtKB-EC"/>
</dbReference>
<dbReference type="GO" id="GO:0022900">
    <property type="term" value="P:electron transport chain"/>
    <property type="evidence" value="ECO:0007669"/>
    <property type="project" value="InterPro"/>
</dbReference>
<dbReference type="GO" id="GO:0007595">
    <property type="term" value="P:lactation"/>
    <property type="evidence" value="ECO:0007669"/>
    <property type="project" value="Ensembl"/>
</dbReference>
<dbReference type="GO" id="GO:0001666">
    <property type="term" value="P:response to hypoxia"/>
    <property type="evidence" value="ECO:0007669"/>
    <property type="project" value="Ensembl"/>
</dbReference>
<dbReference type="CDD" id="cd13912">
    <property type="entry name" value="CcO_II_C"/>
    <property type="match status" value="1"/>
</dbReference>
<dbReference type="FunFam" id="1.10.287.90:FF:000001">
    <property type="entry name" value="Cytochrome c oxidase subunit 2"/>
    <property type="match status" value="1"/>
</dbReference>
<dbReference type="FunFam" id="2.60.40.420:FF:000001">
    <property type="entry name" value="Cytochrome c oxidase subunit 2"/>
    <property type="match status" value="1"/>
</dbReference>
<dbReference type="Gene3D" id="1.10.287.90">
    <property type="match status" value="1"/>
</dbReference>
<dbReference type="Gene3D" id="2.60.40.420">
    <property type="entry name" value="Cupredoxins - blue copper proteins"/>
    <property type="match status" value="1"/>
</dbReference>
<dbReference type="InterPro" id="IPR045187">
    <property type="entry name" value="CcO_II"/>
</dbReference>
<dbReference type="InterPro" id="IPR002429">
    <property type="entry name" value="CcO_II-like_C"/>
</dbReference>
<dbReference type="InterPro" id="IPR034210">
    <property type="entry name" value="CcO_II_C"/>
</dbReference>
<dbReference type="InterPro" id="IPR001505">
    <property type="entry name" value="Copper_CuA"/>
</dbReference>
<dbReference type="InterPro" id="IPR008972">
    <property type="entry name" value="Cupredoxin"/>
</dbReference>
<dbReference type="InterPro" id="IPR014222">
    <property type="entry name" value="Cyt_c_oxidase_su2"/>
</dbReference>
<dbReference type="InterPro" id="IPR011759">
    <property type="entry name" value="Cyt_c_oxidase_su2_TM_dom"/>
</dbReference>
<dbReference type="InterPro" id="IPR036257">
    <property type="entry name" value="Cyt_c_oxidase_su2_TM_sf"/>
</dbReference>
<dbReference type="NCBIfam" id="TIGR02866">
    <property type="entry name" value="CoxB"/>
    <property type="match status" value="1"/>
</dbReference>
<dbReference type="PANTHER" id="PTHR22888:SF9">
    <property type="entry name" value="CYTOCHROME C OXIDASE SUBUNIT 2"/>
    <property type="match status" value="1"/>
</dbReference>
<dbReference type="PANTHER" id="PTHR22888">
    <property type="entry name" value="CYTOCHROME C OXIDASE, SUBUNIT II"/>
    <property type="match status" value="1"/>
</dbReference>
<dbReference type="Pfam" id="PF00116">
    <property type="entry name" value="COX2"/>
    <property type="match status" value="1"/>
</dbReference>
<dbReference type="Pfam" id="PF02790">
    <property type="entry name" value="COX2_TM"/>
    <property type="match status" value="1"/>
</dbReference>
<dbReference type="PRINTS" id="PR01166">
    <property type="entry name" value="CYCOXIDASEII"/>
</dbReference>
<dbReference type="SUPFAM" id="SSF49503">
    <property type="entry name" value="Cupredoxins"/>
    <property type="match status" value="1"/>
</dbReference>
<dbReference type="SUPFAM" id="SSF81464">
    <property type="entry name" value="Cytochrome c oxidase subunit II-like, transmembrane region"/>
    <property type="match status" value="1"/>
</dbReference>
<dbReference type="PROSITE" id="PS00078">
    <property type="entry name" value="COX2"/>
    <property type="match status" value="1"/>
</dbReference>
<dbReference type="PROSITE" id="PS50857">
    <property type="entry name" value="COX2_CUA"/>
    <property type="match status" value="1"/>
</dbReference>
<dbReference type="PROSITE" id="PS50999">
    <property type="entry name" value="COX2_TM"/>
    <property type="match status" value="1"/>
</dbReference>
<name>COX2_MOUSE</name>
<keyword id="KW-0002">3D-structure</keyword>
<keyword id="KW-0186">Copper</keyword>
<keyword id="KW-0903">Direct protein sequencing</keyword>
<keyword id="KW-0249">Electron transport</keyword>
<keyword id="KW-0460">Magnesium</keyword>
<keyword id="KW-0472">Membrane</keyword>
<keyword id="KW-0479">Metal-binding</keyword>
<keyword id="KW-0496">Mitochondrion</keyword>
<keyword id="KW-0999">Mitochondrion inner membrane</keyword>
<keyword id="KW-0597">Phosphoprotein</keyword>
<keyword id="KW-1185">Reference proteome</keyword>
<keyword id="KW-0679">Respiratory chain</keyword>
<keyword id="KW-1278">Translocase</keyword>
<keyword id="KW-0812">Transmembrane</keyword>
<keyword id="KW-1133">Transmembrane helix</keyword>
<keyword id="KW-0813">Transport</keyword>
<geneLocation type="mitochondrion"/>
<protein>
    <recommendedName>
        <fullName>Cytochrome c oxidase subunit 2</fullName>
        <ecNumber>7.1.1.9</ecNumber>
    </recommendedName>
    <alternativeName>
        <fullName>Cytochrome c oxidase polypeptide II</fullName>
    </alternativeName>
</protein>